<comment type="function">
    <text evidence="1">Catalyzes the phosphorylation of the 3'-hydroxyl group of dephosphocoenzyme A to form coenzyme A.</text>
</comment>
<comment type="catalytic activity">
    <reaction evidence="1">
        <text>3'-dephospho-CoA + ATP = ADP + CoA + H(+)</text>
        <dbReference type="Rhea" id="RHEA:18245"/>
        <dbReference type="ChEBI" id="CHEBI:15378"/>
        <dbReference type="ChEBI" id="CHEBI:30616"/>
        <dbReference type="ChEBI" id="CHEBI:57287"/>
        <dbReference type="ChEBI" id="CHEBI:57328"/>
        <dbReference type="ChEBI" id="CHEBI:456216"/>
        <dbReference type="EC" id="2.7.1.24"/>
    </reaction>
</comment>
<comment type="pathway">
    <text evidence="1">Cofactor biosynthesis; coenzyme A biosynthesis; CoA from (R)-pantothenate: step 5/5.</text>
</comment>
<comment type="subcellular location">
    <subcellularLocation>
        <location evidence="1">Cytoplasm</location>
    </subcellularLocation>
</comment>
<comment type="similarity">
    <text evidence="1">Belongs to the CoaE family.</text>
</comment>
<name>COAE_XANAC</name>
<feature type="chain" id="PRO_0000173034" description="Dephospho-CoA kinase">
    <location>
        <begin position="1"/>
        <end position="202"/>
    </location>
</feature>
<feature type="domain" description="DPCK" evidence="1">
    <location>
        <begin position="5"/>
        <end position="202"/>
    </location>
</feature>
<feature type="binding site" evidence="1">
    <location>
        <begin position="13"/>
        <end position="18"/>
    </location>
    <ligand>
        <name>ATP</name>
        <dbReference type="ChEBI" id="CHEBI:30616"/>
    </ligand>
</feature>
<proteinExistence type="inferred from homology"/>
<protein>
    <recommendedName>
        <fullName evidence="1">Dephospho-CoA kinase</fullName>
        <ecNumber evidence="1">2.7.1.24</ecNumber>
    </recommendedName>
    <alternativeName>
        <fullName evidence="1">Dephosphocoenzyme A kinase</fullName>
    </alternativeName>
</protein>
<keyword id="KW-0067">ATP-binding</keyword>
<keyword id="KW-0173">Coenzyme A biosynthesis</keyword>
<keyword id="KW-0963">Cytoplasm</keyword>
<keyword id="KW-0418">Kinase</keyword>
<keyword id="KW-0547">Nucleotide-binding</keyword>
<keyword id="KW-0808">Transferase</keyword>
<organism>
    <name type="scientific">Xanthomonas axonopodis pv. citri (strain 306)</name>
    <dbReference type="NCBI Taxonomy" id="190486"/>
    <lineage>
        <taxon>Bacteria</taxon>
        <taxon>Pseudomonadati</taxon>
        <taxon>Pseudomonadota</taxon>
        <taxon>Gammaproteobacteria</taxon>
        <taxon>Lysobacterales</taxon>
        <taxon>Lysobacteraceae</taxon>
        <taxon>Xanthomonas</taxon>
    </lineage>
</organism>
<evidence type="ECO:0000255" key="1">
    <source>
        <dbReference type="HAMAP-Rule" id="MF_00376"/>
    </source>
</evidence>
<dbReference type="EC" id="2.7.1.24" evidence="1"/>
<dbReference type="EMBL" id="AE008923">
    <property type="protein sequence ID" value="AAM38088.1"/>
    <property type="molecule type" value="Genomic_DNA"/>
</dbReference>
<dbReference type="RefSeq" id="WP_011052129.1">
    <property type="nucleotide sequence ID" value="NC_003919.1"/>
</dbReference>
<dbReference type="SMR" id="Q8PHK7"/>
<dbReference type="GeneID" id="66912306"/>
<dbReference type="KEGG" id="xac:XAC3244"/>
<dbReference type="eggNOG" id="COG0237">
    <property type="taxonomic scope" value="Bacteria"/>
</dbReference>
<dbReference type="HOGENOM" id="CLU_057180_1_2_6"/>
<dbReference type="UniPathway" id="UPA00241">
    <property type="reaction ID" value="UER00356"/>
</dbReference>
<dbReference type="Proteomes" id="UP000000576">
    <property type="component" value="Chromosome"/>
</dbReference>
<dbReference type="GO" id="GO:0005737">
    <property type="term" value="C:cytoplasm"/>
    <property type="evidence" value="ECO:0007669"/>
    <property type="project" value="UniProtKB-SubCell"/>
</dbReference>
<dbReference type="GO" id="GO:0005524">
    <property type="term" value="F:ATP binding"/>
    <property type="evidence" value="ECO:0007669"/>
    <property type="project" value="UniProtKB-UniRule"/>
</dbReference>
<dbReference type="GO" id="GO:0004140">
    <property type="term" value="F:dephospho-CoA kinase activity"/>
    <property type="evidence" value="ECO:0007669"/>
    <property type="project" value="UniProtKB-UniRule"/>
</dbReference>
<dbReference type="GO" id="GO:0015937">
    <property type="term" value="P:coenzyme A biosynthetic process"/>
    <property type="evidence" value="ECO:0007669"/>
    <property type="project" value="UniProtKB-UniRule"/>
</dbReference>
<dbReference type="CDD" id="cd02022">
    <property type="entry name" value="DPCK"/>
    <property type="match status" value="1"/>
</dbReference>
<dbReference type="Gene3D" id="3.40.50.300">
    <property type="entry name" value="P-loop containing nucleotide triphosphate hydrolases"/>
    <property type="match status" value="1"/>
</dbReference>
<dbReference type="HAMAP" id="MF_00376">
    <property type="entry name" value="Dephospho_CoA_kinase"/>
    <property type="match status" value="1"/>
</dbReference>
<dbReference type="InterPro" id="IPR001977">
    <property type="entry name" value="Depp_CoAkinase"/>
</dbReference>
<dbReference type="InterPro" id="IPR027417">
    <property type="entry name" value="P-loop_NTPase"/>
</dbReference>
<dbReference type="NCBIfam" id="TIGR00152">
    <property type="entry name" value="dephospho-CoA kinase"/>
    <property type="match status" value="1"/>
</dbReference>
<dbReference type="PANTHER" id="PTHR10695:SF46">
    <property type="entry name" value="BIFUNCTIONAL COENZYME A SYNTHASE-RELATED"/>
    <property type="match status" value="1"/>
</dbReference>
<dbReference type="PANTHER" id="PTHR10695">
    <property type="entry name" value="DEPHOSPHO-COA KINASE-RELATED"/>
    <property type="match status" value="1"/>
</dbReference>
<dbReference type="Pfam" id="PF01121">
    <property type="entry name" value="CoaE"/>
    <property type="match status" value="1"/>
</dbReference>
<dbReference type="SUPFAM" id="SSF52540">
    <property type="entry name" value="P-loop containing nucleoside triphosphate hydrolases"/>
    <property type="match status" value="1"/>
</dbReference>
<dbReference type="PROSITE" id="PS51219">
    <property type="entry name" value="DPCK"/>
    <property type="match status" value="1"/>
</dbReference>
<gene>
    <name evidence="1" type="primary">coaE</name>
    <name type="ordered locus">XAC3244</name>
</gene>
<reference key="1">
    <citation type="journal article" date="2002" name="Nature">
        <title>Comparison of the genomes of two Xanthomonas pathogens with differing host specificities.</title>
        <authorList>
            <person name="da Silva A.C.R."/>
            <person name="Ferro J.A."/>
            <person name="Reinach F.C."/>
            <person name="Farah C.S."/>
            <person name="Furlan L.R."/>
            <person name="Quaggio R.B."/>
            <person name="Monteiro-Vitorello C.B."/>
            <person name="Van Sluys M.A."/>
            <person name="Almeida N.F. Jr."/>
            <person name="Alves L.M.C."/>
            <person name="do Amaral A.M."/>
            <person name="Bertolini M.C."/>
            <person name="Camargo L.E.A."/>
            <person name="Camarotte G."/>
            <person name="Cannavan F."/>
            <person name="Cardozo J."/>
            <person name="Chambergo F."/>
            <person name="Ciapina L.P."/>
            <person name="Cicarelli R.M.B."/>
            <person name="Coutinho L.L."/>
            <person name="Cursino-Santos J.R."/>
            <person name="El-Dorry H."/>
            <person name="Faria J.B."/>
            <person name="Ferreira A.J.S."/>
            <person name="Ferreira R.C.C."/>
            <person name="Ferro M.I.T."/>
            <person name="Formighieri E.F."/>
            <person name="Franco M.C."/>
            <person name="Greggio C.C."/>
            <person name="Gruber A."/>
            <person name="Katsuyama A.M."/>
            <person name="Kishi L.T."/>
            <person name="Leite R.P."/>
            <person name="Lemos E.G.M."/>
            <person name="Lemos M.V.F."/>
            <person name="Locali E.C."/>
            <person name="Machado M.A."/>
            <person name="Madeira A.M.B.N."/>
            <person name="Martinez-Rossi N.M."/>
            <person name="Martins E.C."/>
            <person name="Meidanis J."/>
            <person name="Menck C.F.M."/>
            <person name="Miyaki C.Y."/>
            <person name="Moon D.H."/>
            <person name="Moreira L.M."/>
            <person name="Novo M.T.M."/>
            <person name="Okura V.K."/>
            <person name="Oliveira M.C."/>
            <person name="Oliveira V.R."/>
            <person name="Pereira H.A."/>
            <person name="Rossi A."/>
            <person name="Sena J.A.D."/>
            <person name="Silva C."/>
            <person name="de Souza R.F."/>
            <person name="Spinola L.A.F."/>
            <person name="Takita M.A."/>
            <person name="Tamura R.E."/>
            <person name="Teixeira E.C."/>
            <person name="Tezza R.I.D."/>
            <person name="Trindade dos Santos M."/>
            <person name="Truffi D."/>
            <person name="Tsai S.M."/>
            <person name="White F.F."/>
            <person name="Setubal J.C."/>
            <person name="Kitajima J.P."/>
        </authorList>
    </citation>
    <scope>NUCLEOTIDE SEQUENCE [LARGE SCALE GENOMIC DNA]</scope>
    <source>
        <strain>306</strain>
    </source>
</reference>
<sequence>MSDFIVGLTGGIASGKSALAAEFEKLGVPVIDADVIARQVAEPGPILDAIAAYFGDSVLLPDGTLNRQALRYRVFADTAQRQALEAITHPAIRRELQRAALAAQGPYAIVAIPLLAEAGGRATYPWLDRILVVDVPVALQHERLMQRDGATAELADRMITAQATREKRLAIADEVVCNHGVLKQLSQAARRLDADYRARANP</sequence>
<accession>Q8PHK7</accession>